<feature type="chain" id="PRO_0000102199" description="Competence protein ComFA">
    <location>
        <begin position="1"/>
        <end position="463"/>
    </location>
</feature>
<feature type="domain" description="Helicase ATP-binding" evidence="2">
    <location>
        <begin position="133"/>
        <end position="285"/>
    </location>
</feature>
<feature type="domain" description="Helicase C-terminal" evidence="3">
    <location>
        <begin position="317"/>
        <end position="463"/>
    </location>
</feature>
<feature type="short sequence motif" description="DEAD box" evidence="2">
    <location>
        <begin position="233"/>
        <end position="236"/>
    </location>
</feature>
<feature type="binding site" evidence="15">
    <location>
        <position position="60"/>
    </location>
    <ligand>
        <name>Zn(2+)</name>
        <dbReference type="ChEBI" id="CHEBI:29105"/>
    </ligand>
</feature>
<feature type="binding site" evidence="15">
    <location>
        <position position="63"/>
    </location>
    <ligand>
        <name>Zn(2+)</name>
        <dbReference type="ChEBI" id="CHEBI:29105"/>
    </ligand>
</feature>
<feature type="binding site" evidence="15">
    <location>
        <position position="84"/>
    </location>
    <ligand>
        <name>Zn(2+)</name>
        <dbReference type="ChEBI" id="CHEBI:29105"/>
    </ligand>
</feature>
<feature type="binding site" evidence="15">
    <location>
        <position position="87"/>
    </location>
    <ligand>
        <name>Zn(2+)</name>
        <dbReference type="ChEBI" id="CHEBI:29105"/>
    </ligand>
</feature>
<feature type="binding site" evidence="2">
    <location>
        <begin position="146"/>
        <end position="153"/>
    </location>
    <ligand>
        <name>ATP</name>
        <dbReference type="ChEBI" id="CHEBI:30616"/>
    </ligand>
</feature>
<feature type="mutagenesis site" description="100-fold decrease in transformation efficiency, does not bind Zn(2+)." evidence="8">
    <original>CNRCGQTDQRYFSFYHSSGKNKLYCRSC</original>
    <variation>SNRSGQTDQRYFSFYHSSGKNKLYSRSS</variation>
    <location>
        <begin position="60"/>
        <end position="87"/>
    </location>
</feature>
<feature type="mutagenesis site" description="10-fold decrease in transformation efficiency." evidence="8">
    <original>C</original>
    <variation>S</variation>
    <location>
        <position position="60"/>
    </location>
</feature>
<feature type="mutagenesis site" description="10-fold decrease in transformation efficiency." evidence="8">
    <original>C</original>
    <variation>S</variation>
    <location>
        <position position="63"/>
    </location>
</feature>
<feature type="mutagenesis site" description="100-fold decrease in transformation efficiency." evidence="8">
    <original>CRSC</original>
    <variation>SRSS</variation>
    <location>
        <begin position="84"/>
        <end position="87"/>
    </location>
</feature>
<feature type="mutagenesis site" description="10-fold decrease in transformation efficiency." evidence="8">
    <original>C</original>
    <variation>S</variation>
    <location>
        <position position="84"/>
    </location>
</feature>
<feature type="mutagenesis site" description="10-fold decrease in transformation efficiency." evidence="8">
    <original>C</original>
    <variation>S</variation>
    <location>
        <position position="87"/>
    </location>
</feature>
<feature type="mutagenesis site" description="Does not complement a deletion, ComFA accumulates normally, 0.7% transformation efficiency, takes up DNA very poorly." evidence="9">
    <original>GK</original>
    <variation>RN</variation>
    <location>
        <begin position="151"/>
        <end position="152"/>
    </location>
</feature>
<feature type="mutagenesis site" description="100-fold decrease in transformation efficiency." evidence="8">
    <original>G</original>
    <variation>N</variation>
    <location>
        <position position="151"/>
    </location>
</feature>
<feature type="mutagenesis site" description="100-fold decrease in transformation efficiency." evidence="8">
    <original>K</original>
    <variation>A</variation>
    <location>
        <position position="152"/>
    </location>
</feature>
<feature type="mutagenesis site" description="Does not complement a deletion, ComFA accumulates normally, 0.6% transformation efficiency, takes up DNA very poorly. 100-fold decrease in transformation efficiency." evidence="8 9">
    <original>K</original>
    <variation>E</variation>
    <location>
        <position position="152"/>
    </location>
</feature>
<feature type="mutagenesis site" description="Partially complements a deletion, ComFA accumulates normally, 6% transformation efficiency, takes up DNA poorly. 100-fold decrease in transformation efficiency." evidence="8 9">
    <original>K</original>
    <variation>N</variation>
    <location>
        <position position="152"/>
    </location>
</feature>
<feature type="mutagenesis site" description="100-fold decrease in transformation efficiency." evidence="8">
    <original>E</original>
    <variation>Q</variation>
    <location>
        <position position="234"/>
    </location>
</feature>
<feature type="mutagenesis site" description="Wild-type transformation efficiency." evidence="8">
    <original>S</original>
    <variation>A</variation>
    <location>
        <position position="264"/>
    </location>
</feature>
<feature type="mutagenesis site" description="100-fold decrease in transformation efficiency." evidence="8">
    <original>T</original>
    <variation>A</variation>
    <location>
        <position position="266"/>
    </location>
</feature>
<feature type="mutagenesis site" description="100-fold decrease in transformation efficiency." evidence="8">
    <original>R</original>
    <variation>K</variation>
    <location>
        <position position="419"/>
    </location>
</feature>
<gene>
    <name evidence="13" type="primary">comFA</name>
    <name evidence="12" type="synonym">comFORF1</name>
    <name type="ordered locus">BSU35470</name>
</gene>
<protein>
    <recommendedName>
        <fullName evidence="11">Competence protein ComFA</fullName>
        <ecNumber evidence="1">3.6.4.-</ecNumber>
    </recommendedName>
    <alternativeName>
        <fullName>ComF operon protein 1</fullName>
    </alternativeName>
</protein>
<sequence>MNVPVEKNSSFSKELQQTLRSRHLLRTELSFSDEMIEWHIKNGYITAENSISINKRRYRCNRCGQTDQRYFSFYHSSGKNKLYCRSCVMMGRVSEEVPLYSWKEENESNWKSIKLTWDGKLSSGQQKAANVLIEAISKKEELLIWAVCGAGKTEMLFPGIESALNQGLRVCIATPRTDVVLELAPRLKAAFQGADISALYGGSDDKGRLSPLMISTTHQLLRYKDAIDVMIIDEVDAFPYSADQTLQFAVQKARKKNSTLVYLSATPPKELKRKALNGQLHSVRIPARHHRKPLPEPRFVWCGNWKKKLNRNKIPPAVKRWIEFHVKEGRPVFLFVPSVSILEKAAACFKGVHCRTASVHAEDKHRKEKVQQFRDGQLDLLITTTILERGVTVPKVQTGVLGAESSIFTESALVQIAGRTGRHKEYADGDVIYFHFGKTKSMLDARKHIKEMNELAAKVECTD</sequence>
<name>COMFA_BACSU</name>
<comment type="function">
    <text evidence="1 8 9 10 16">Involved in transformation (genetic competence for DNA uptake) (PubMed:8412657, PubMed:8045895, PubMed:28559293). Required for DNA uptake but not for DNA binding to cells (PubMed:8045895). DNA uptake is energy dependent, this protein may provide the driving force for DNA uptake (Probable) (PubMed:8412657). Does not have helicase activity, translocates on single-stranded (ss)DNA in a 5'-3' direction in an ATP-dependent manner, but does not unwind double-stranded (ds)DNA (By similarity). ATP hydrolysis causes the release of ssDNA from ComFA. A ssDNA-stimulated ATPase; dsDNA does not stimulate ATPase. ATP hydrolysis causes the release of ssDNA from ComFA. Binds ssDNA but only very poorly to dsDNA in the absence of ATP. Binding to ssDNA does not require free DNA ends (By similarity).</text>
</comment>
<comment type="cofactor">
    <cofactor evidence="8">
        <name>Zn(2+)</name>
        <dbReference type="ChEBI" id="CHEBI:29105"/>
    </cofactor>
    <text evidence="15">May help stabilize the protein (Probable).</text>
</comment>
<comment type="subunit">
    <text evidence="1">Monomer and dimer in solution. Interacts with DprA and ComFC; ComFA-ComFC form rings about 150 Angstroms in diameter with apparent 6-fold symmetry.</text>
</comment>
<comment type="subcellular location">
    <subcellularLocation>
        <location evidence="14">Cytoplasm</location>
    </subcellularLocation>
    <text evidence="6 7">Localizes mostly to the cell poles during the development of competence. Colocalizes with ComGA (PubMed:16009133). During competence a number of proteins (at least CoiA, ComFA, ComGA, DprA, RecA and SsbB) are thought to colocalize at the cell pole, in a disruption of comEC, ComFA no longer accumulates (PubMed:17630974). During development of competence ComGA and presumably ComFA colocalize in discrete foci which accumulate at the cell poles and then delocalize without the overall levels of proteins decreasing, these processes are coincident with the timing of transformability and the site of DNA uptake (PubMed:16009133).</text>
</comment>
<comment type="developmental stage">
    <text evidence="4 6 7 10">A late competence gene (PubMed:8412657). Expressed in cells competent for DNA transformation; that is 5-15% of the population (PubMed:11918817, PubMed:16009133, PubMed:17630974).</text>
</comment>
<comment type="induction">
    <text evidence="4 5 10">Part of the comF operon, encoding comFA, comFB and comFC, transcribed in competence media (minimal salts plus glucose) once stationary phase is reached; transcription requires comA and degU (PubMed:8412657). Expression activated by ComK (PubMed:11918817, PubMed:11948146).</text>
</comment>
<comment type="disruption phenotype">
    <text evidence="7 8 9 10">1000-fold decrease in transformation efficiency (PubMed:8412657, PubMed:8045895, PubMed:28559293). Cells take up DNA very poorly (PubMed:8045895). Destabilization of ComGA (PubMed:17630974). The 'deletion mutation' is an internal deletion of residues 29-143 that has no polar effect on expression of downstream genes (PubMed:8412657, PubMed:8045895, PubMed:28559293).</text>
</comment>
<comment type="similarity">
    <text evidence="15 16">Belongs to the DEAD box helicase family.</text>
</comment>
<reference evidence="18" key="1">
    <citation type="journal article" date="1993" name="Mol. Microbiol.">
        <title>comF, a Bacillus subtilis late competence locus, encodes a protein similar to ATP-dependent RNA/DNA helicases.</title>
        <authorList>
            <person name="Londono-Vallejo J.A."/>
            <person name="Dubnau D."/>
        </authorList>
    </citation>
    <scope>NUCLEOTIDE SEQUENCE [GENOMIC DNA]</scope>
    <scope>FUNCTION</scope>
    <scope>INDUCTION</scope>
    <scope>DISRUPTION PHENOTYPE</scope>
    <source>
        <strain>168</strain>
    </source>
</reference>
<reference evidence="17" key="2">
    <citation type="journal article" date="1996" name="Microbiology">
        <title>Sequence of the 305 degrees-307 degrees region of the Bacillus subtilis chromosome.</title>
        <authorList>
            <person name="Soldo B."/>
            <person name="Lazarevic V."/>
            <person name="Mauel C."/>
            <person name="Karamata D."/>
        </authorList>
    </citation>
    <scope>NUCLEOTIDE SEQUENCE [GENOMIC DNA]</scope>
    <source>
        <strain>168</strain>
    </source>
</reference>
<reference evidence="19" key="3">
    <citation type="journal article" date="1997" name="Nature">
        <title>The complete genome sequence of the Gram-positive bacterium Bacillus subtilis.</title>
        <authorList>
            <person name="Kunst F."/>
            <person name="Ogasawara N."/>
            <person name="Moszer I."/>
            <person name="Albertini A.M."/>
            <person name="Alloni G."/>
            <person name="Azevedo V."/>
            <person name="Bertero M.G."/>
            <person name="Bessieres P."/>
            <person name="Bolotin A."/>
            <person name="Borchert S."/>
            <person name="Borriss R."/>
            <person name="Boursier L."/>
            <person name="Brans A."/>
            <person name="Braun M."/>
            <person name="Brignell S.C."/>
            <person name="Bron S."/>
            <person name="Brouillet S."/>
            <person name="Bruschi C.V."/>
            <person name="Caldwell B."/>
            <person name="Capuano V."/>
            <person name="Carter N.M."/>
            <person name="Choi S.-K."/>
            <person name="Codani J.-J."/>
            <person name="Connerton I.F."/>
            <person name="Cummings N.J."/>
            <person name="Daniel R.A."/>
            <person name="Denizot F."/>
            <person name="Devine K.M."/>
            <person name="Duesterhoeft A."/>
            <person name="Ehrlich S.D."/>
            <person name="Emmerson P.T."/>
            <person name="Entian K.-D."/>
            <person name="Errington J."/>
            <person name="Fabret C."/>
            <person name="Ferrari E."/>
            <person name="Foulger D."/>
            <person name="Fritz C."/>
            <person name="Fujita M."/>
            <person name="Fujita Y."/>
            <person name="Fuma S."/>
            <person name="Galizzi A."/>
            <person name="Galleron N."/>
            <person name="Ghim S.-Y."/>
            <person name="Glaser P."/>
            <person name="Goffeau A."/>
            <person name="Golightly E.J."/>
            <person name="Grandi G."/>
            <person name="Guiseppi G."/>
            <person name="Guy B.J."/>
            <person name="Haga K."/>
            <person name="Haiech J."/>
            <person name="Harwood C.R."/>
            <person name="Henaut A."/>
            <person name="Hilbert H."/>
            <person name="Holsappel S."/>
            <person name="Hosono S."/>
            <person name="Hullo M.-F."/>
            <person name="Itaya M."/>
            <person name="Jones L.-M."/>
            <person name="Joris B."/>
            <person name="Karamata D."/>
            <person name="Kasahara Y."/>
            <person name="Klaerr-Blanchard M."/>
            <person name="Klein C."/>
            <person name="Kobayashi Y."/>
            <person name="Koetter P."/>
            <person name="Koningstein G."/>
            <person name="Krogh S."/>
            <person name="Kumano M."/>
            <person name="Kurita K."/>
            <person name="Lapidus A."/>
            <person name="Lardinois S."/>
            <person name="Lauber J."/>
            <person name="Lazarevic V."/>
            <person name="Lee S.-M."/>
            <person name="Levine A."/>
            <person name="Liu H."/>
            <person name="Masuda S."/>
            <person name="Mauel C."/>
            <person name="Medigue C."/>
            <person name="Medina N."/>
            <person name="Mellado R.P."/>
            <person name="Mizuno M."/>
            <person name="Moestl D."/>
            <person name="Nakai S."/>
            <person name="Noback M."/>
            <person name="Noone D."/>
            <person name="O'Reilly M."/>
            <person name="Ogawa K."/>
            <person name="Ogiwara A."/>
            <person name="Oudega B."/>
            <person name="Park S.-H."/>
            <person name="Parro V."/>
            <person name="Pohl T.M."/>
            <person name="Portetelle D."/>
            <person name="Porwollik S."/>
            <person name="Prescott A.M."/>
            <person name="Presecan E."/>
            <person name="Pujic P."/>
            <person name="Purnelle B."/>
            <person name="Rapoport G."/>
            <person name="Rey M."/>
            <person name="Reynolds S."/>
            <person name="Rieger M."/>
            <person name="Rivolta C."/>
            <person name="Rocha E."/>
            <person name="Roche B."/>
            <person name="Rose M."/>
            <person name="Sadaie Y."/>
            <person name="Sato T."/>
            <person name="Scanlan E."/>
            <person name="Schleich S."/>
            <person name="Schroeter R."/>
            <person name="Scoffone F."/>
            <person name="Sekiguchi J."/>
            <person name="Sekowska A."/>
            <person name="Seror S.J."/>
            <person name="Serror P."/>
            <person name="Shin B.-S."/>
            <person name="Soldo B."/>
            <person name="Sorokin A."/>
            <person name="Tacconi E."/>
            <person name="Takagi T."/>
            <person name="Takahashi H."/>
            <person name="Takemaru K."/>
            <person name="Takeuchi M."/>
            <person name="Tamakoshi A."/>
            <person name="Tanaka T."/>
            <person name="Terpstra P."/>
            <person name="Tognoni A."/>
            <person name="Tosato V."/>
            <person name="Uchiyama S."/>
            <person name="Vandenbol M."/>
            <person name="Vannier F."/>
            <person name="Vassarotti A."/>
            <person name="Viari A."/>
            <person name="Wambutt R."/>
            <person name="Wedler E."/>
            <person name="Wedler H."/>
            <person name="Weitzenegger T."/>
            <person name="Winters P."/>
            <person name="Wipat A."/>
            <person name="Yamamoto H."/>
            <person name="Yamane K."/>
            <person name="Yasumoto K."/>
            <person name="Yata K."/>
            <person name="Yoshida K."/>
            <person name="Yoshikawa H.-F."/>
            <person name="Zumstein E."/>
            <person name="Yoshikawa H."/>
            <person name="Danchin A."/>
        </authorList>
    </citation>
    <scope>NUCLEOTIDE SEQUENCE [LARGE SCALE GENOMIC DNA]</scope>
    <source>
        <strain>168</strain>
    </source>
</reference>
<reference key="4">
    <citation type="journal article" date="1994" name="J. Bacteriol.">
        <title>Mutation of the putative nucleotide binding site of the Bacillus subtilis membrane protein ComFA abolishes the uptake of DNA during transformation.</title>
        <authorList>
            <person name="Londono-Vallejo J.A."/>
            <person name="Dubnau D."/>
        </authorList>
    </citation>
    <scope>FUNCTION</scope>
    <scope>DISRUPTION PHENOTYPE</scope>
    <scope>MUTAGENESIS OF 151-GLY-LYS-152 AND LYS-152</scope>
    <source>
        <strain>168</strain>
    </source>
</reference>
<reference key="5">
    <citation type="journal article" date="2002" name="Mol. Microbiol.">
        <title>Microarray analysis of the Bacillus subtilis K-state: genome-wide expression changes dependent on ComK.</title>
        <authorList>
            <person name="Berka R.M."/>
            <person name="Hahn J."/>
            <person name="Albano M."/>
            <person name="Draskovic I."/>
            <person name="Persuh M."/>
            <person name="Cui X."/>
            <person name="Sloma A."/>
            <person name="Widner W."/>
            <person name="Dubnau D."/>
        </authorList>
    </citation>
    <scope>DEVELOPMENTAL STAGE</scope>
    <scope>INDUCTION</scope>
    <source>
        <strain>168</strain>
    </source>
</reference>
<reference key="6">
    <citation type="journal article" date="2002" name="J. Bacteriol.">
        <title>Whole-genome analysis of genes regulated by the Bacillus subtilis competence transcription factor ComK.</title>
        <authorList>
            <person name="Ogura M."/>
            <person name="Yamaguchi H."/>
            <person name="Kobayashi K."/>
            <person name="Ogasawara N."/>
            <person name="Fujita Y."/>
            <person name="Tanaka T."/>
        </authorList>
    </citation>
    <scope>INDUCTION</scope>
    <source>
        <strain>168 / CU741</strain>
    </source>
</reference>
<reference key="7">
    <citation type="journal article" date="2005" name="Cell">
        <title>Transformation proteins and DNA uptake localize to the cell poles in Bacillus subtilis.</title>
        <authorList>
            <person name="Hahn J."/>
            <person name="Maier B."/>
            <person name="Haijema B.J."/>
            <person name="Sheetz M."/>
            <person name="Dubnau D."/>
        </authorList>
    </citation>
    <scope>SUBCELLULAR LOCATION</scope>
    <scope>DEVELOPMENTAL STAGE</scope>
    <source>
        <strain>168</strain>
    </source>
</reference>
<reference key="8">
    <citation type="journal article" date="2007" name="Mol. Microbiol.">
        <title>Multiple interactions among the competence proteins of Bacillus subtilis.</title>
        <authorList>
            <person name="Kramer N."/>
            <person name="Hahn J."/>
            <person name="Dubnau D."/>
        </authorList>
    </citation>
    <scope>SUBCELLULAR LOCATION</scope>
    <scope>DEVELOPMENTAL STAGE</scope>
    <scope>DISRUPTION PHENOTYPE</scope>
    <source>
        <strain>168</strain>
    </source>
</reference>
<reference key="9">
    <citation type="journal article" date="2017" name="J. Bacteriol.">
        <title>A Conserved Metal Binding Motif in the Bacillus subtilis Competence Protein ComFA Enhances Transformation.</title>
        <authorList>
            <person name="Chilton S.S."/>
            <person name="Falbel T.G."/>
            <person name="Hromada S."/>
            <person name="Burton B.M."/>
        </authorList>
    </citation>
    <scope>FUNCTION</scope>
    <scope>COFACTOR</scope>
    <scope>DISRUPTION PHENOTYPE</scope>
    <scope>MUTAGENESIS OF 60-CYS--CYS-87; CYS-60; CYS-63; 84-CYS--CYS-87; CYS-84; CYS-87; GLY-151; LYS-152; GLU-234; SER-264; THR-266 AND ARG-419</scope>
    <source>
        <strain>168 / PY79</strain>
    </source>
</reference>
<evidence type="ECO:0000250" key="1">
    <source>
        <dbReference type="UniProtKB" id="Q8CWM9"/>
    </source>
</evidence>
<evidence type="ECO:0000255" key="2">
    <source>
        <dbReference type="PROSITE-ProRule" id="PRU00541"/>
    </source>
</evidence>
<evidence type="ECO:0000255" key="3">
    <source>
        <dbReference type="PROSITE-ProRule" id="PRU00542"/>
    </source>
</evidence>
<evidence type="ECO:0000269" key="4">
    <source>
    </source>
</evidence>
<evidence type="ECO:0000269" key="5">
    <source>
    </source>
</evidence>
<evidence type="ECO:0000269" key="6">
    <source>
    </source>
</evidence>
<evidence type="ECO:0000269" key="7">
    <source>
    </source>
</evidence>
<evidence type="ECO:0000269" key="8">
    <source>
    </source>
</evidence>
<evidence type="ECO:0000269" key="9">
    <source>
    </source>
</evidence>
<evidence type="ECO:0000269" key="10">
    <source>
    </source>
</evidence>
<evidence type="ECO:0000303" key="11">
    <source>
    </source>
</evidence>
<evidence type="ECO:0000303" key="12">
    <source>
    </source>
</evidence>
<evidence type="ECO:0000303" key="13">
    <source>
    </source>
</evidence>
<evidence type="ECO:0000305" key="14"/>
<evidence type="ECO:0000305" key="15">
    <source>
    </source>
</evidence>
<evidence type="ECO:0000305" key="16">
    <source>
    </source>
</evidence>
<evidence type="ECO:0000312" key="17">
    <source>
        <dbReference type="EMBL" id="AAC44940.1"/>
    </source>
</evidence>
<evidence type="ECO:0000312" key="18">
    <source>
        <dbReference type="EMBL" id="CAA79226.1"/>
    </source>
</evidence>
<evidence type="ECO:0000312" key="19">
    <source>
        <dbReference type="EMBL" id="CAB15564.1"/>
    </source>
</evidence>
<dbReference type="EC" id="3.6.4.-" evidence="1"/>
<dbReference type="EMBL" id="Z18629">
    <property type="protein sequence ID" value="CAA79226.1"/>
    <property type="molecule type" value="Genomic_DNA"/>
</dbReference>
<dbReference type="EMBL" id="U56901">
    <property type="protein sequence ID" value="AAC44940.1"/>
    <property type="molecule type" value="Genomic_DNA"/>
</dbReference>
<dbReference type="EMBL" id="AL009126">
    <property type="protein sequence ID" value="CAB15564.1"/>
    <property type="molecule type" value="Genomic_DNA"/>
</dbReference>
<dbReference type="PIR" id="G69602">
    <property type="entry name" value="G69602"/>
</dbReference>
<dbReference type="RefSeq" id="NP_391427.1">
    <property type="nucleotide sequence ID" value="NC_000964.3"/>
</dbReference>
<dbReference type="RefSeq" id="WP_003243962.1">
    <property type="nucleotide sequence ID" value="NZ_OZ025638.1"/>
</dbReference>
<dbReference type="SMR" id="P39145"/>
<dbReference type="FunCoup" id="P39145">
    <property type="interactions" value="23"/>
</dbReference>
<dbReference type="STRING" id="224308.BSU35470"/>
<dbReference type="TCDB" id="3.A.11.1.1">
    <property type="family name" value="the bacterial competence-related dna transformation transporter (dna-t) family"/>
</dbReference>
<dbReference type="PaxDb" id="224308-BSU35470"/>
<dbReference type="EnsemblBacteria" id="CAB15564">
    <property type="protein sequence ID" value="CAB15564"/>
    <property type="gene ID" value="BSU_35470"/>
</dbReference>
<dbReference type="GeneID" id="938537"/>
<dbReference type="KEGG" id="bsu:BSU35470"/>
<dbReference type="PATRIC" id="fig|224308.179.peg.3838"/>
<dbReference type="eggNOG" id="COG4098">
    <property type="taxonomic scope" value="Bacteria"/>
</dbReference>
<dbReference type="InParanoid" id="P39145"/>
<dbReference type="OrthoDB" id="2077914at2"/>
<dbReference type="PhylomeDB" id="P39145"/>
<dbReference type="BioCyc" id="BSUB:BSU35470-MONOMER"/>
<dbReference type="Proteomes" id="UP000001570">
    <property type="component" value="Chromosome"/>
</dbReference>
<dbReference type="GO" id="GO:0005737">
    <property type="term" value="C:cytoplasm"/>
    <property type="evidence" value="ECO:0007669"/>
    <property type="project" value="UniProtKB-SubCell"/>
</dbReference>
<dbReference type="GO" id="GO:0043138">
    <property type="term" value="F:3'-5' DNA helicase activity"/>
    <property type="evidence" value="ECO:0000318"/>
    <property type="project" value="GO_Central"/>
</dbReference>
<dbReference type="GO" id="GO:0005524">
    <property type="term" value="F:ATP binding"/>
    <property type="evidence" value="ECO:0007669"/>
    <property type="project" value="UniProtKB-KW"/>
</dbReference>
<dbReference type="GO" id="GO:0016887">
    <property type="term" value="F:ATP hydrolysis activity"/>
    <property type="evidence" value="ECO:0007669"/>
    <property type="project" value="RHEA"/>
</dbReference>
<dbReference type="GO" id="GO:0003676">
    <property type="term" value="F:nucleic acid binding"/>
    <property type="evidence" value="ECO:0007669"/>
    <property type="project" value="InterPro"/>
</dbReference>
<dbReference type="GO" id="GO:0006310">
    <property type="term" value="P:DNA recombination"/>
    <property type="evidence" value="ECO:0000318"/>
    <property type="project" value="GO_Central"/>
</dbReference>
<dbReference type="GO" id="GO:0006260">
    <property type="term" value="P:DNA replication"/>
    <property type="evidence" value="ECO:0000318"/>
    <property type="project" value="GO_Central"/>
</dbReference>
<dbReference type="GO" id="GO:0006270">
    <property type="term" value="P:DNA replication initiation"/>
    <property type="evidence" value="ECO:0000318"/>
    <property type="project" value="GO_Central"/>
</dbReference>
<dbReference type="GO" id="GO:0006302">
    <property type="term" value="P:double-strand break repair"/>
    <property type="evidence" value="ECO:0000318"/>
    <property type="project" value="GO_Central"/>
</dbReference>
<dbReference type="GO" id="GO:0030420">
    <property type="term" value="P:establishment of competence for transformation"/>
    <property type="evidence" value="ECO:0007669"/>
    <property type="project" value="UniProtKB-KW"/>
</dbReference>
<dbReference type="CDD" id="cd17925">
    <property type="entry name" value="DEXDc_ComFA"/>
    <property type="match status" value="1"/>
</dbReference>
<dbReference type="FunFam" id="3.40.50.300:FF:001736">
    <property type="entry name" value="COMF operon protein 1"/>
    <property type="match status" value="1"/>
</dbReference>
<dbReference type="FunFam" id="3.40.50.300:FF:001697">
    <property type="entry name" value="ComF operon protein 1"/>
    <property type="match status" value="1"/>
</dbReference>
<dbReference type="Gene3D" id="3.40.50.300">
    <property type="entry name" value="P-loop containing nucleotide triphosphate hydrolases"/>
    <property type="match status" value="2"/>
</dbReference>
<dbReference type="InterPro" id="IPR011545">
    <property type="entry name" value="DEAD/DEAH_box_helicase_dom"/>
</dbReference>
<dbReference type="InterPro" id="IPR014001">
    <property type="entry name" value="Helicase_ATP-bd"/>
</dbReference>
<dbReference type="InterPro" id="IPR001650">
    <property type="entry name" value="Helicase_C-like"/>
</dbReference>
<dbReference type="InterPro" id="IPR027417">
    <property type="entry name" value="P-loop_NTPase"/>
</dbReference>
<dbReference type="InterPro" id="IPR050880">
    <property type="entry name" value="PriA_helicase"/>
</dbReference>
<dbReference type="PANTHER" id="PTHR30580:SF1">
    <property type="entry name" value="COMF OPERON PROTEIN 1"/>
    <property type="match status" value="1"/>
</dbReference>
<dbReference type="PANTHER" id="PTHR30580">
    <property type="entry name" value="PRIMOSOMAL PROTEIN N"/>
    <property type="match status" value="1"/>
</dbReference>
<dbReference type="Pfam" id="PF00270">
    <property type="entry name" value="DEAD"/>
    <property type="match status" value="1"/>
</dbReference>
<dbReference type="Pfam" id="PF00271">
    <property type="entry name" value="Helicase_C"/>
    <property type="match status" value="1"/>
</dbReference>
<dbReference type="SMART" id="SM00487">
    <property type="entry name" value="DEXDc"/>
    <property type="match status" value="1"/>
</dbReference>
<dbReference type="SMART" id="SM00490">
    <property type="entry name" value="HELICc"/>
    <property type="match status" value="1"/>
</dbReference>
<dbReference type="SUPFAM" id="SSF52540">
    <property type="entry name" value="P-loop containing nucleoside triphosphate hydrolases"/>
    <property type="match status" value="1"/>
</dbReference>
<dbReference type="PROSITE" id="PS51192">
    <property type="entry name" value="HELICASE_ATP_BIND_1"/>
    <property type="match status" value="1"/>
</dbReference>
<dbReference type="PROSITE" id="PS51194">
    <property type="entry name" value="HELICASE_CTER"/>
    <property type="match status" value="1"/>
</dbReference>
<accession>P39145</accession>
<keyword id="KW-0067">ATP-binding</keyword>
<keyword id="KW-0178">Competence</keyword>
<keyword id="KW-0963">Cytoplasm</keyword>
<keyword id="KW-0238">DNA-binding</keyword>
<keyword id="KW-0378">Hydrolase</keyword>
<keyword id="KW-0479">Metal-binding</keyword>
<keyword id="KW-0547">Nucleotide-binding</keyword>
<keyword id="KW-1185">Reference proteome</keyword>
<keyword id="KW-0862">Zinc</keyword>
<organism>
    <name type="scientific">Bacillus subtilis (strain 168)</name>
    <dbReference type="NCBI Taxonomy" id="224308"/>
    <lineage>
        <taxon>Bacteria</taxon>
        <taxon>Bacillati</taxon>
        <taxon>Bacillota</taxon>
        <taxon>Bacilli</taxon>
        <taxon>Bacillales</taxon>
        <taxon>Bacillaceae</taxon>
        <taxon>Bacillus</taxon>
    </lineage>
</organism>
<proteinExistence type="evidence at protein level"/>